<feature type="chain" id="PRO_0000107255" description="Uncharacterized protein MJ1288.1">
    <location>
        <begin position="1"/>
        <end position="123"/>
    </location>
</feature>
<feature type="transmembrane region" description="Helical" evidence="1">
    <location>
        <begin position="1"/>
        <end position="21"/>
    </location>
</feature>
<evidence type="ECO:0000255" key="1"/>
<evidence type="ECO:0000305" key="2"/>
<reference key="1">
    <citation type="journal article" date="1996" name="Science">
        <title>Complete genome sequence of the methanogenic archaeon, Methanococcus jannaschii.</title>
        <authorList>
            <person name="Bult C.J."/>
            <person name="White O."/>
            <person name="Olsen G.J."/>
            <person name="Zhou L."/>
            <person name="Fleischmann R.D."/>
            <person name="Sutton G.G."/>
            <person name="Blake J.A."/>
            <person name="FitzGerald L.M."/>
            <person name="Clayton R.A."/>
            <person name="Gocayne J.D."/>
            <person name="Kerlavage A.R."/>
            <person name="Dougherty B.A."/>
            <person name="Tomb J.-F."/>
            <person name="Adams M.D."/>
            <person name="Reich C.I."/>
            <person name="Overbeek R."/>
            <person name="Kirkness E.F."/>
            <person name="Weinstock K.G."/>
            <person name="Merrick J.M."/>
            <person name="Glodek A."/>
            <person name="Scott J.L."/>
            <person name="Geoghagen N.S.M."/>
            <person name="Weidman J.F."/>
            <person name="Fuhrmann J.L."/>
            <person name="Nguyen D."/>
            <person name="Utterback T.R."/>
            <person name="Kelley J.M."/>
            <person name="Peterson J.D."/>
            <person name="Sadow P.W."/>
            <person name="Hanna M.C."/>
            <person name="Cotton M.D."/>
            <person name="Roberts K.M."/>
            <person name="Hurst M.A."/>
            <person name="Kaine B.P."/>
            <person name="Borodovsky M."/>
            <person name="Klenk H.-P."/>
            <person name="Fraser C.M."/>
            <person name="Smith H.O."/>
            <person name="Woese C.R."/>
            <person name="Venter J.C."/>
        </authorList>
    </citation>
    <scope>NUCLEOTIDE SEQUENCE [LARGE SCALE GENOMIC DNA]</scope>
    <source>
        <strain>ATCC 43067 / DSM 2661 / JAL-1 / JCM 10045 / NBRC 100440</strain>
    </source>
</reference>
<sequence>MHIIAKSILLMAVSFLVIIFTSTIYSELIEIGKYRYIDKVDREITSEVMNAVVLANEGNITLYKKINLNCKVIFENNSFTIIFQNKTYVHKFNNNIRFFKNEISDISKISCKKVNNTYMIYIE</sequence>
<keyword id="KW-0472">Membrane</keyword>
<keyword id="KW-1185">Reference proteome</keyword>
<keyword id="KW-0812">Transmembrane</keyword>
<keyword id="KW-1133">Transmembrane helix</keyword>
<comment type="subcellular location">
    <subcellularLocation>
        <location evidence="2">Membrane</location>
        <topology evidence="2">Single-pass membrane protein</topology>
    </subcellularLocation>
</comment>
<dbReference type="EMBL" id="L77117">
    <property type="protein sequence ID" value="AAB99300.1"/>
    <property type="molecule type" value="Genomic_DNA"/>
</dbReference>
<dbReference type="RefSeq" id="WP_010870804.1">
    <property type="nucleotide sequence ID" value="NC_000909.1"/>
</dbReference>
<dbReference type="SMR" id="P81320"/>
<dbReference type="STRING" id="243232.MJ_1288.1"/>
<dbReference type="PaxDb" id="243232-MJ_1288.1"/>
<dbReference type="EnsemblBacteria" id="AAB99300">
    <property type="protein sequence ID" value="AAB99300"/>
    <property type="gene ID" value="MJ_1288.1"/>
</dbReference>
<dbReference type="GeneID" id="1452189"/>
<dbReference type="KEGG" id="mja:MJ_1288.1"/>
<dbReference type="eggNOG" id="arCOG08271">
    <property type="taxonomic scope" value="Archaea"/>
</dbReference>
<dbReference type="HOGENOM" id="CLU_2021506_0_0_2"/>
<dbReference type="InParanoid" id="P81320"/>
<dbReference type="OrthoDB" id="65437at2157"/>
<dbReference type="Proteomes" id="UP000000805">
    <property type="component" value="Chromosome"/>
</dbReference>
<dbReference type="GO" id="GO:0016020">
    <property type="term" value="C:membrane"/>
    <property type="evidence" value="ECO:0007669"/>
    <property type="project" value="UniProtKB-SubCell"/>
</dbReference>
<protein>
    <recommendedName>
        <fullName>Uncharacterized protein MJ1288.1</fullName>
    </recommendedName>
</protein>
<organism>
    <name type="scientific">Methanocaldococcus jannaschii (strain ATCC 43067 / DSM 2661 / JAL-1 / JCM 10045 / NBRC 100440)</name>
    <name type="common">Methanococcus jannaschii</name>
    <dbReference type="NCBI Taxonomy" id="243232"/>
    <lineage>
        <taxon>Archaea</taxon>
        <taxon>Methanobacteriati</taxon>
        <taxon>Methanobacteriota</taxon>
        <taxon>Methanomada group</taxon>
        <taxon>Methanococci</taxon>
        <taxon>Methanococcales</taxon>
        <taxon>Methanocaldococcaceae</taxon>
        <taxon>Methanocaldococcus</taxon>
    </lineage>
</organism>
<name>YC8C_METJA</name>
<proteinExistence type="predicted"/>
<gene>
    <name type="ordered locus">MJ1288.1</name>
</gene>
<accession>P81320</accession>